<reference key="1">
    <citation type="submission" date="2004-11" db="EMBL/GenBank/DDBJ databases">
        <authorList>
            <consortium name="The German cDNA consortium"/>
        </authorList>
    </citation>
    <scope>NUCLEOTIDE SEQUENCE [LARGE SCALE MRNA]</scope>
    <source>
        <tissue>Brain cortex</tissue>
    </source>
</reference>
<protein>
    <recommendedName>
        <fullName>Ras-related protein Ral-B</fullName>
        <ecNumber evidence="5">3.6.5.2</ecNumber>
    </recommendedName>
</protein>
<keyword id="KW-0053">Apoptosis</keyword>
<keyword id="KW-0131">Cell cycle</keyword>
<keyword id="KW-0132">Cell division</keyword>
<keyword id="KW-1003">Cell membrane</keyword>
<keyword id="KW-0342">GTP-binding</keyword>
<keyword id="KW-0378">Hydrolase</keyword>
<keyword id="KW-0449">Lipoprotein</keyword>
<keyword id="KW-0472">Membrane</keyword>
<keyword id="KW-0488">Methylation</keyword>
<keyword id="KW-0547">Nucleotide-binding</keyword>
<keyword id="KW-0636">Prenylation</keyword>
<keyword id="KW-1185">Reference proteome</keyword>
<comment type="function">
    <text evidence="2 3">Multifunctional GTPase involved in a variety of cellular processes including gene expression, cell migration, cell proliferation, oncogenic transformation and membrane trafficking. Accomplishes its multiple functions by interacting with distinct downstream effectors. Acts as a GTP sensor for GTP-dependent exocytosis of dense core vesicles (By similarity). Required both to stabilize the assembly of the exocyst complex and to localize functional exocyst complexes to the leading edge of migrating cells (By similarity). Required for suppression of apoptosis (By similarity). In late stages of cytokinesis, upon completion of the bridge formation between dividing cells, mediates exocyst recruitment to the midbody to drive abscission (By similarity). Involved in ligand-dependent receptor mediated endocytosis of the EGF and insulin receptors (By similarity).</text>
</comment>
<comment type="catalytic activity">
    <reaction evidence="5">
        <text>GTP + H2O = GDP + phosphate + H(+)</text>
        <dbReference type="Rhea" id="RHEA:19669"/>
        <dbReference type="ChEBI" id="CHEBI:15377"/>
        <dbReference type="ChEBI" id="CHEBI:15378"/>
        <dbReference type="ChEBI" id="CHEBI:37565"/>
        <dbReference type="ChEBI" id="CHEBI:43474"/>
        <dbReference type="ChEBI" id="CHEBI:58189"/>
        <dbReference type="EC" id="3.6.5.2"/>
    </reaction>
</comment>
<comment type="activity regulation">
    <text>Alternates between an inactive form bound to GDP and an active form bound to GTP. Activated by a guanine nucleotide-exchange factor (GEF) and inactivated by a GTPase-activating protein (GAP).</text>
</comment>
<comment type="subunit">
    <text evidence="2">Interacts with EXOC2/Sec5 and EXOC8/Exo84. Interacts (via effector domain) with RALBP1.</text>
</comment>
<comment type="subcellular location">
    <subcellularLocation>
        <location evidence="2">Cell membrane</location>
        <topology evidence="2">Lipid-anchor</topology>
        <orientation evidence="2">Cytoplasmic side</orientation>
    </subcellularLocation>
    <subcellularLocation>
        <location evidence="2">Midbody</location>
    </subcellularLocation>
    <text evidence="2">During late cytokinesis, enriched at the midbody.</text>
</comment>
<comment type="PTM">
    <text evidence="2">Prenylation is essential for membrane localization.</text>
</comment>
<comment type="PTM">
    <text evidence="2">The farnesylated form confers resistance to the proapoptotic and anti-anchorage-dependent growth effects of some geranylgeranyltransferase I inhibitors.</text>
</comment>
<comment type="similarity">
    <text evidence="5">Belongs to the small GTPase superfamily. Ras family.</text>
</comment>
<dbReference type="EC" id="3.6.5.2" evidence="5"/>
<dbReference type="EMBL" id="CR861334">
    <property type="protein sequence ID" value="CAH93398.1"/>
    <property type="molecule type" value="mRNA"/>
</dbReference>
<dbReference type="RefSeq" id="NP_001126995.1">
    <property type="nucleotide sequence ID" value="NM_001133523.1"/>
</dbReference>
<dbReference type="RefSeq" id="XP_009235922.1">
    <property type="nucleotide sequence ID" value="XM_009237647.4"/>
</dbReference>
<dbReference type="BMRB" id="Q5R4B8"/>
<dbReference type="SMR" id="Q5R4B8"/>
<dbReference type="FunCoup" id="Q5R4B8">
    <property type="interactions" value="1219"/>
</dbReference>
<dbReference type="STRING" id="9601.ENSPPYP00000014262"/>
<dbReference type="GeneID" id="100174018"/>
<dbReference type="KEGG" id="pon:100174018"/>
<dbReference type="CTD" id="5899"/>
<dbReference type="eggNOG" id="KOG0395">
    <property type="taxonomic scope" value="Eukaryota"/>
</dbReference>
<dbReference type="HOGENOM" id="CLU_041217_9_8_1"/>
<dbReference type="InParanoid" id="Q5R4B8"/>
<dbReference type="OrthoDB" id="5976022at2759"/>
<dbReference type="Proteomes" id="UP000001595">
    <property type="component" value="Unplaced"/>
</dbReference>
<dbReference type="GO" id="GO:0030496">
    <property type="term" value="C:midbody"/>
    <property type="evidence" value="ECO:0000250"/>
    <property type="project" value="UniProtKB"/>
</dbReference>
<dbReference type="GO" id="GO:0005886">
    <property type="term" value="C:plasma membrane"/>
    <property type="evidence" value="ECO:0000250"/>
    <property type="project" value="UniProtKB"/>
</dbReference>
<dbReference type="GO" id="GO:0003925">
    <property type="term" value="F:G protein activity"/>
    <property type="evidence" value="ECO:0007669"/>
    <property type="project" value="UniProtKB-EC"/>
</dbReference>
<dbReference type="GO" id="GO:0005525">
    <property type="term" value="F:GTP binding"/>
    <property type="evidence" value="ECO:0000250"/>
    <property type="project" value="UniProtKB"/>
</dbReference>
<dbReference type="GO" id="GO:0003924">
    <property type="term" value="F:GTPase activity"/>
    <property type="evidence" value="ECO:0000250"/>
    <property type="project" value="UniProtKB"/>
</dbReference>
<dbReference type="GO" id="GO:0006915">
    <property type="term" value="P:apoptotic process"/>
    <property type="evidence" value="ECO:0007669"/>
    <property type="project" value="UniProtKB-KW"/>
</dbReference>
<dbReference type="GO" id="GO:0051301">
    <property type="term" value="P:cell division"/>
    <property type="evidence" value="ECO:0007669"/>
    <property type="project" value="UniProtKB-KW"/>
</dbReference>
<dbReference type="GO" id="GO:0001928">
    <property type="term" value="P:regulation of exocyst assembly"/>
    <property type="evidence" value="ECO:0000250"/>
    <property type="project" value="UniProtKB"/>
</dbReference>
<dbReference type="GO" id="GO:0060178">
    <property type="term" value="P:regulation of exocyst localization"/>
    <property type="evidence" value="ECO:0000250"/>
    <property type="project" value="UniProtKB"/>
</dbReference>
<dbReference type="GO" id="GO:0007165">
    <property type="term" value="P:signal transduction"/>
    <property type="evidence" value="ECO:0007669"/>
    <property type="project" value="InterPro"/>
</dbReference>
<dbReference type="CDD" id="cd04139">
    <property type="entry name" value="RalA_RalB"/>
    <property type="match status" value="1"/>
</dbReference>
<dbReference type="FunFam" id="3.40.50.300:FF:000203">
    <property type="entry name" value="Putative ras-related protein ral-a"/>
    <property type="match status" value="1"/>
</dbReference>
<dbReference type="Gene3D" id="3.40.50.300">
    <property type="entry name" value="P-loop containing nucleotide triphosphate hydrolases"/>
    <property type="match status" value="1"/>
</dbReference>
<dbReference type="InterPro" id="IPR027417">
    <property type="entry name" value="P-loop_NTPase"/>
</dbReference>
<dbReference type="InterPro" id="IPR005225">
    <property type="entry name" value="Small_GTP-bd"/>
</dbReference>
<dbReference type="InterPro" id="IPR001806">
    <property type="entry name" value="Small_GTPase"/>
</dbReference>
<dbReference type="InterPro" id="IPR020849">
    <property type="entry name" value="Small_GTPase_Ras-type"/>
</dbReference>
<dbReference type="NCBIfam" id="TIGR00231">
    <property type="entry name" value="small_GTP"/>
    <property type="match status" value="1"/>
</dbReference>
<dbReference type="PANTHER" id="PTHR24070">
    <property type="entry name" value="RAS, DI-RAS, AND RHEB FAMILY MEMBERS OF SMALL GTPASE SUPERFAMILY"/>
    <property type="match status" value="1"/>
</dbReference>
<dbReference type="Pfam" id="PF00071">
    <property type="entry name" value="Ras"/>
    <property type="match status" value="1"/>
</dbReference>
<dbReference type="PRINTS" id="PR00449">
    <property type="entry name" value="RASTRNSFRMNG"/>
</dbReference>
<dbReference type="SMART" id="SM00175">
    <property type="entry name" value="RAB"/>
    <property type="match status" value="1"/>
</dbReference>
<dbReference type="SMART" id="SM00176">
    <property type="entry name" value="RAN"/>
    <property type="match status" value="1"/>
</dbReference>
<dbReference type="SMART" id="SM00173">
    <property type="entry name" value="RAS"/>
    <property type="match status" value="1"/>
</dbReference>
<dbReference type="SMART" id="SM00174">
    <property type="entry name" value="RHO"/>
    <property type="match status" value="1"/>
</dbReference>
<dbReference type="SUPFAM" id="SSF52540">
    <property type="entry name" value="P-loop containing nucleoside triphosphate hydrolases"/>
    <property type="match status" value="1"/>
</dbReference>
<dbReference type="PROSITE" id="PS51421">
    <property type="entry name" value="RAS"/>
    <property type="match status" value="1"/>
</dbReference>
<gene>
    <name type="primary">RALB</name>
</gene>
<sequence>MAANKSKGQSSLALHKVIMVGSGGVGKSALTLQFMYDEFVEDYEPTKADSYRKKVVLDGEEVQIDILDTAGQEDYAAIRDNYFRSGEGFLLVFSITEHESFTATAEFREQILRVKAEEDKIPLLVVGNKSDLEERRQVPVEEARSKAEEWGVQYVETSAKTRANVDKVFFDLMREIRTKKMSENKDKNGKKSSKNKKSFKERCCLL</sequence>
<accession>Q5R4B8</accession>
<organism>
    <name type="scientific">Pongo abelii</name>
    <name type="common">Sumatran orangutan</name>
    <name type="synonym">Pongo pygmaeus abelii</name>
    <dbReference type="NCBI Taxonomy" id="9601"/>
    <lineage>
        <taxon>Eukaryota</taxon>
        <taxon>Metazoa</taxon>
        <taxon>Chordata</taxon>
        <taxon>Craniata</taxon>
        <taxon>Vertebrata</taxon>
        <taxon>Euteleostomi</taxon>
        <taxon>Mammalia</taxon>
        <taxon>Eutheria</taxon>
        <taxon>Euarchontoglires</taxon>
        <taxon>Primates</taxon>
        <taxon>Haplorrhini</taxon>
        <taxon>Catarrhini</taxon>
        <taxon>Hominidae</taxon>
        <taxon>Pongo</taxon>
    </lineage>
</organism>
<proteinExistence type="evidence at transcript level"/>
<feature type="chain" id="PRO_0000260756" description="Ras-related protein Ral-B">
    <location>
        <begin position="1"/>
        <end position="203"/>
    </location>
</feature>
<feature type="propeptide" id="PRO_0000281352" description="Removed in mature form" evidence="1">
    <location>
        <begin position="204"/>
        <end position="206"/>
    </location>
</feature>
<feature type="region of interest" description="Disordered" evidence="4">
    <location>
        <begin position="180"/>
        <end position="206"/>
    </location>
</feature>
<feature type="short sequence motif" description="Effector region">
    <location>
        <begin position="43"/>
        <end position="51"/>
    </location>
</feature>
<feature type="compositionally biased region" description="Basic and acidic residues" evidence="4">
    <location>
        <begin position="180"/>
        <end position="189"/>
    </location>
</feature>
<feature type="binding site" evidence="1">
    <location>
        <begin position="21"/>
        <end position="29"/>
    </location>
    <ligand>
        <name>GTP</name>
        <dbReference type="ChEBI" id="CHEBI:37565"/>
    </ligand>
</feature>
<feature type="binding site" evidence="1">
    <location>
        <begin position="68"/>
        <end position="72"/>
    </location>
    <ligand>
        <name>GTP</name>
        <dbReference type="ChEBI" id="CHEBI:37565"/>
    </ligand>
</feature>
<feature type="binding site" evidence="1">
    <location>
        <begin position="128"/>
        <end position="131"/>
    </location>
    <ligand>
        <name>GTP</name>
        <dbReference type="ChEBI" id="CHEBI:37565"/>
    </ligand>
</feature>
<feature type="binding site" evidence="1">
    <location>
        <begin position="158"/>
        <end position="160"/>
    </location>
    <ligand>
        <name>GTP</name>
        <dbReference type="ChEBI" id="CHEBI:37565"/>
    </ligand>
</feature>
<feature type="modified residue" description="Cysteine methyl ester" evidence="1">
    <location>
        <position position="203"/>
    </location>
</feature>
<feature type="lipid moiety-binding region" description="S-geranylgeranyl cysteine" evidence="1">
    <location>
        <position position="203"/>
    </location>
</feature>
<name>RALB_PONAB</name>
<evidence type="ECO:0000250" key="1"/>
<evidence type="ECO:0000250" key="2">
    <source>
        <dbReference type="UniProtKB" id="P11234"/>
    </source>
</evidence>
<evidence type="ECO:0000250" key="3">
    <source>
        <dbReference type="UniProtKB" id="P36860"/>
    </source>
</evidence>
<evidence type="ECO:0000256" key="4">
    <source>
        <dbReference type="SAM" id="MobiDB-lite"/>
    </source>
</evidence>
<evidence type="ECO:0000305" key="5"/>